<reference key="1">
    <citation type="journal article" date="2001" name="Nature">
        <title>Complete genome sequence of Salmonella enterica serovar Typhimurium LT2.</title>
        <authorList>
            <person name="McClelland M."/>
            <person name="Sanderson K.E."/>
            <person name="Spieth J."/>
            <person name="Clifton S.W."/>
            <person name="Latreille P."/>
            <person name="Courtney L."/>
            <person name="Porwollik S."/>
            <person name="Ali J."/>
            <person name="Dante M."/>
            <person name="Du F."/>
            <person name="Hou S."/>
            <person name="Layman D."/>
            <person name="Leonard S."/>
            <person name="Nguyen C."/>
            <person name="Scott K."/>
            <person name="Holmes A."/>
            <person name="Grewal N."/>
            <person name="Mulvaney E."/>
            <person name="Ryan E."/>
            <person name="Sun H."/>
            <person name="Florea L."/>
            <person name="Miller W."/>
            <person name="Stoneking T."/>
            <person name="Nhan M."/>
            <person name="Waterston R."/>
            <person name="Wilson R.K."/>
        </authorList>
    </citation>
    <scope>NUCLEOTIDE SEQUENCE [LARGE SCALE GENOMIC DNA]</scope>
    <source>
        <strain>LT2 / SGSC1412 / ATCC 700720</strain>
    </source>
</reference>
<gene>
    <name type="primary">yfjF</name>
    <name type="ordered locus">STM2686</name>
</gene>
<proteinExistence type="inferred from homology"/>
<protein>
    <recommendedName>
        <fullName evidence="1">UPF0125 protein YfjF</fullName>
    </recommendedName>
</protein>
<sequence length="96" mass="10806">MPDKLVVEVAYALPEKQYLQRVTLEEGATVEEAIRASGLLELRTDIDLAKNKVGIYSRPVKLTDTVQDGDRVEIYRPLIADPKALRRQRAEKSAGR</sequence>
<organism>
    <name type="scientific">Salmonella typhimurium (strain LT2 / SGSC1412 / ATCC 700720)</name>
    <dbReference type="NCBI Taxonomy" id="99287"/>
    <lineage>
        <taxon>Bacteria</taxon>
        <taxon>Pseudomonadati</taxon>
        <taxon>Pseudomonadota</taxon>
        <taxon>Gammaproteobacteria</taxon>
        <taxon>Enterobacterales</taxon>
        <taxon>Enterobacteriaceae</taxon>
        <taxon>Salmonella</taxon>
    </lineage>
</organism>
<name>YFJF_SALTY</name>
<accession>P0A2L7</accession>
<accession>Q8Z4I2</accession>
<accession>Q8ZMW0</accession>
<dbReference type="EMBL" id="AE006468">
    <property type="protein sequence ID" value="AAL21575.1"/>
    <property type="molecule type" value="Genomic_DNA"/>
</dbReference>
<dbReference type="RefSeq" id="NP_461616.1">
    <property type="nucleotide sequence ID" value="NC_003197.2"/>
</dbReference>
<dbReference type="RefSeq" id="WP_001112990.1">
    <property type="nucleotide sequence ID" value="NC_003197.2"/>
</dbReference>
<dbReference type="SMR" id="P0A2L7"/>
<dbReference type="STRING" id="99287.STM2686"/>
<dbReference type="PaxDb" id="99287-STM2686"/>
<dbReference type="GeneID" id="1254209"/>
<dbReference type="KEGG" id="stm:STM2686"/>
<dbReference type="PATRIC" id="fig|99287.12.peg.2831"/>
<dbReference type="HOGENOM" id="CLU_150721_1_0_6"/>
<dbReference type="OMA" id="QQACPEV"/>
<dbReference type="PhylomeDB" id="P0A2L7"/>
<dbReference type="BioCyc" id="SENT99287:STM2686-MONOMER"/>
<dbReference type="Proteomes" id="UP000001014">
    <property type="component" value="Chromosome"/>
</dbReference>
<dbReference type="Gene3D" id="3.10.20.280">
    <property type="entry name" value="RnfH-like"/>
    <property type="match status" value="1"/>
</dbReference>
<dbReference type="HAMAP" id="MF_00460">
    <property type="entry name" value="UPF0125_RnfH"/>
    <property type="match status" value="1"/>
</dbReference>
<dbReference type="InterPro" id="IPR016155">
    <property type="entry name" value="Mopterin_synth/thiamin_S_b"/>
</dbReference>
<dbReference type="InterPro" id="IPR005346">
    <property type="entry name" value="RnfH"/>
</dbReference>
<dbReference type="InterPro" id="IPR037021">
    <property type="entry name" value="RnfH_sf"/>
</dbReference>
<dbReference type="NCBIfam" id="NF002490">
    <property type="entry name" value="PRK01777.1"/>
    <property type="match status" value="1"/>
</dbReference>
<dbReference type="PANTHER" id="PTHR37483">
    <property type="entry name" value="UPF0125 PROTEIN RATB"/>
    <property type="match status" value="1"/>
</dbReference>
<dbReference type="PANTHER" id="PTHR37483:SF1">
    <property type="entry name" value="UPF0125 PROTEIN RATB"/>
    <property type="match status" value="1"/>
</dbReference>
<dbReference type="Pfam" id="PF03658">
    <property type="entry name" value="Ub-RnfH"/>
    <property type="match status" value="1"/>
</dbReference>
<dbReference type="SUPFAM" id="SSF54285">
    <property type="entry name" value="MoaD/ThiS"/>
    <property type="match status" value="1"/>
</dbReference>
<evidence type="ECO:0000255" key="1">
    <source>
        <dbReference type="HAMAP-Rule" id="MF_00460"/>
    </source>
</evidence>
<keyword id="KW-1185">Reference proteome</keyword>
<comment type="similarity">
    <text evidence="1">Belongs to the UPF0125 (RnfH) family.</text>
</comment>
<feature type="chain" id="PRO_0000192500" description="UPF0125 protein YfjF">
    <location>
        <begin position="1"/>
        <end position="96"/>
    </location>
</feature>